<organism>
    <name type="scientific">Synechococcus sp. (strain CC9902)</name>
    <dbReference type="NCBI Taxonomy" id="316279"/>
    <lineage>
        <taxon>Bacteria</taxon>
        <taxon>Bacillati</taxon>
        <taxon>Cyanobacteriota</taxon>
        <taxon>Cyanophyceae</taxon>
        <taxon>Synechococcales</taxon>
        <taxon>Synechococcaceae</taxon>
        <taxon>Synechococcus</taxon>
    </lineage>
</organism>
<name>Y023_SYNS9</name>
<reference key="1">
    <citation type="submission" date="2005-08" db="EMBL/GenBank/DDBJ databases">
        <title>Complete sequence of Synechococcus sp. CC9902.</title>
        <authorList>
            <person name="Copeland A."/>
            <person name="Lucas S."/>
            <person name="Lapidus A."/>
            <person name="Barry K."/>
            <person name="Detter J.C."/>
            <person name="Glavina T."/>
            <person name="Hammon N."/>
            <person name="Israni S."/>
            <person name="Pitluck S."/>
            <person name="Martinez M."/>
            <person name="Schmutz J."/>
            <person name="Larimer F."/>
            <person name="Land M."/>
            <person name="Kyrpides N."/>
            <person name="Ivanova N."/>
            <person name="Richardson P."/>
        </authorList>
    </citation>
    <scope>NUCLEOTIDE SEQUENCE [LARGE SCALE GENOMIC DNA]</scope>
    <source>
        <strain>CC9902</strain>
    </source>
</reference>
<accession>Q3B0Y0</accession>
<protein>
    <recommendedName>
        <fullName evidence="1">Nucleoid-associated protein Syncc9902_0023</fullName>
    </recommendedName>
</protein>
<keyword id="KW-0963">Cytoplasm</keyword>
<keyword id="KW-0238">DNA-binding</keyword>
<keyword id="KW-1185">Reference proteome</keyword>
<proteinExistence type="inferred from homology"/>
<evidence type="ECO:0000255" key="1">
    <source>
        <dbReference type="HAMAP-Rule" id="MF_00274"/>
    </source>
</evidence>
<dbReference type="EMBL" id="CP000097">
    <property type="protein sequence ID" value="ABB24998.1"/>
    <property type="molecule type" value="Genomic_DNA"/>
</dbReference>
<dbReference type="RefSeq" id="WP_011358868.1">
    <property type="nucleotide sequence ID" value="NC_007513.1"/>
</dbReference>
<dbReference type="SMR" id="Q3B0Y0"/>
<dbReference type="STRING" id="316279.Syncc9902_0023"/>
<dbReference type="KEGG" id="sye:Syncc9902_0023"/>
<dbReference type="eggNOG" id="COG0718">
    <property type="taxonomic scope" value="Bacteria"/>
</dbReference>
<dbReference type="HOGENOM" id="CLU_140930_0_1_3"/>
<dbReference type="OrthoDB" id="487780at2"/>
<dbReference type="Proteomes" id="UP000002712">
    <property type="component" value="Chromosome"/>
</dbReference>
<dbReference type="GO" id="GO:0043590">
    <property type="term" value="C:bacterial nucleoid"/>
    <property type="evidence" value="ECO:0007669"/>
    <property type="project" value="UniProtKB-UniRule"/>
</dbReference>
<dbReference type="GO" id="GO:0005829">
    <property type="term" value="C:cytosol"/>
    <property type="evidence" value="ECO:0007669"/>
    <property type="project" value="TreeGrafter"/>
</dbReference>
<dbReference type="GO" id="GO:0003677">
    <property type="term" value="F:DNA binding"/>
    <property type="evidence" value="ECO:0007669"/>
    <property type="project" value="UniProtKB-UniRule"/>
</dbReference>
<dbReference type="Gene3D" id="3.30.1310.10">
    <property type="entry name" value="Nucleoid-associated protein YbaB-like domain"/>
    <property type="match status" value="1"/>
</dbReference>
<dbReference type="HAMAP" id="MF_00274">
    <property type="entry name" value="DNA_YbaB_EbfC"/>
    <property type="match status" value="1"/>
</dbReference>
<dbReference type="InterPro" id="IPR036894">
    <property type="entry name" value="YbaB-like_sf"/>
</dbReference>
<dbReference type="InterPro" id="IPR004401">
    <property type="entry name" value="YbaB/EbfC"/>
</dbReference>
<dbReference type="NCBIfam" id="TIGR00103">
    <property type="entry name" value="DNA_YbaB_EbfC"/>
    <property type="match status" value="1"/>
</dbReference>
<dbReference type="PANTHER" id="PTHR33449">
    <property type="entry name" value="NUCLEOID-ASSOCIATED PROTEIN YBAB"/>
    <property type="match status" value="1"/>
</dbReference>
<dbReference type="PANTHER" id="PTHR33449:SF1">
    <property type="entry name" value="NUCLEOID-ASSOCIATED PROTEIN YBAB"/>
    <property type="match status" value="1"/>
</dbReference>
<dbReference type="Pfam" id="PF02575">
    <property type="entry name" value="YbaB_DNA_bd"/>
    <property type="match status" value="1"/>
</dbReference>
<dbReference type="PIRSF" id="PIRSF004555">
    <property type="entry name" value="UCP004555"/>
    <property type="match status" value="1"/>
</dbReference>
<dbReference type="SUPFAM" id="SSF82607">
    <property type="entry name" value="YbaB-like"/>
    <property type="match status" value="1"/>
</dbReference>
<sequence>MAGFGLPNFGQLTEAFRKAQQIQQDAQALQEELDGMEIEGKNSDGRASVWLSGNQQPLRVRLDPALVQDGAEACETATLEALQAAYEQSTATMKGRMEELTGGLNLNLPGMGG</sequence>
<gene>
    <name type="ordered locus">Syncc9902_0023</name>
</gene>
<feature type="chain" id="PRO_1000003858" description="Nucleoid-associated protein Syncc9902_0023">
    <location>
        <begin position="1"/>
        <end position="113"/>
    </location>
</feature>
<comment type="function">
    <text evidence="1">Binds to DNA and alters its conformation. May be involved in regulation of gene expression, nucleoid organization and DNA protection.</text>
</comment>
<comment type="subunit">
    <text evidence="1">Homodimer.</text>
</comment>
<comment type="subcellular location">
    <subcellularLocation>
        <location evidence="1">Cytoplasm</location>
        <location evidence="1">Nucleoid</location>
    </subcellularLocation>
</comment>
<comment type="similarity">
    <text evidence="1">Belongs to the YbaB/EbfC family.</text>
</comment>